<name>OCAT2_HUMAN</name>
<reference key="1">
    <citation type="journal article" date="2004" name="Nat. Genet.">
        <title>Complete sequencing and characterization of 21,243 full-length human cDNAs.</title>
        <authorList>
            <person name="Ota T."/>
            <person name="Suzuki Y."/>
            <person name="Nishikawa T."/>
            <person name="Otsuki T."/>
            <person name="Sugiyama T."/>
            <person name="Irie R."/>
            <person name="Wakamatsu A."/>
            <person name="Hayashi K."/>
            <person name="Sato H."/>
            <person name="Nagai K."/>
            <person name="Kimura K."/>
            <person name="Makita H."/>
            <person name="Sekine M."/>
            <person name="Obayashi M."/>
            <person name="Nishi T."/>
            <person name="Shibahara T."/>
            <person name="Tanaka T."/>
            <person name="Ishii S."/>
            <person name="Yamamoto J."/>
            <person name="Saito K."/>
            <person name="Kawai Y."/>
            <person name="Isono Y."/>
            <person name="Nakamura Y."/>
            <person name="Nagahari K."/>
            <person name="Murakami K."/>
            <person name="Yasuda T."/>
            <person name="Iwayanagi T."/>
            <person name="Wagatsuma M."/>
            <person name="Shiratori A."/>
            <person name="Sudo H."/>
            <person name="Hosoiri T."/>
            <person name="Kaku Y."/>
            <person name="Kodaira H."/>
            <person name="Kondo H."/>
            <person name="Sugawara M."/>
            <person name="Takahashi M."/>
            <person name="Kanda K."/>
            <person name="Yokoi T."/>
            <person name="Furuya T."/>
            <person name="Kikkawa E."/>
            <person name="Omura Y."/>
            <person name="Abe K."/>
            <person name="Kamihara K."/>
            <person name="Katsuta N."/>
            <person name="Sato K."/>
            <person name="Tanikawa M."/>
            <person name="Yamazaki M."/>
            <person name="Ninomiya K."/>
            <person name="Ishibashi T."/>
            <person name="Yamashita H."/>
            <person name="Murakawa K."/>
            <person name="Fujimori K."/>
            <person name="Tanai H."/>
            <person name="Kimata M."/>
            <person name="Watanabe M."/>
            <person name="Hiraoka S."/>
            <person name="Chiba Y."/>
            <person name="Ishida S."/>
            <person name="Ono Y."/>
            <person name="Takiguchi S."/>
            <person name="Watanabe S."/>
            <person name="Yosida M."/>
            <person name="Hotuta T."/>
            <person name="Kusano J."/>
            <person name="Kanehori K."/>
            <person name="Takahashi-Fujii A."/>
            <person name="Hara H."/>
            <person name="Tanase T.-O."/>
            <person name="Nomura Y."/>
            <person name="Togiya S."/>
            <person name="Komai F."/>
            <person name="Hara R."/>
            <person name="Takeuchi K."/>
            <person name="Arita M."/>
            <person name="Imose N."/>
            <person name="Musashino K."/>
            <person name="Yuuki H."/>
            <person name="Oshima A."/>
            <person name="Sasaki N."/>
            <person name="Aotsuka S."/>
            <person name="Yoshikawa Y."/>
            <person name="Matsunawa H."/>
            <person name="Ichihara T."/>
            <person name="Shiohata N."/>
            <person name="Sano S."/>
            <person name="Moriya S."/>
            <person name="Momiyama H."/>
            <person name="Satoh N."/>
            <person name="Takami S."/>
            <person name="Terashima Y."/>
            <person name="Suzuki O."/>
            <person name="Nakagawa S."/>
            <person name="Senoh A."/>
            <person name="Mizoguchi H."/>
            <person name="Goto Y."/>
            <person name="Shimizu F."/>
            <person name="Wakebe H."/>
            <person name="Hishigaki H."/>
            <person name="Watanabe T."/>
            <person name="Sugiyama A."/>
            <person name="Takemoto M."/>
            <person name="Kawakami B."/>
            <person name="Yamazaki M."/>
            <person name="Watanabe K."/>
            <person name="Kumagai A."/>
            <person name="Itakura S."/>
            <person name="Fukuzumi Y."/>
            <person name="Fujimori Y."/>
            <person name="Komiyama M."/>
            <person name="Tashiro H."/>
            <person name="Tanigami A."/>
            <person name="Fujiwara T."/>
            <person name="Ono T."/>
            <person name="Yamada K."/>
            <person name="Fujii Y."/>
            <person name="Ozaki K."/>
            <person name="Hirao M."/>
            <person name="Ohmori Y."/>
            <person name="Kawabata A."/>
            <person name="Hikiji T."/>
            <person name="Kobatake N."/>
            <person name="Inagaki H."/>
            <person name="Ikema Y."/>
            <person name="Okamoto S."/>
            <person name="Okitani R."/>
            <person name="Kawakami T."/>
            <person name="Noguchi S."/>
            <person name="Itoh T."/>
            <person name="Shigeta K."/>
            <person name="Senba T."/>
            <person name="Matsumura K."/>
            <person name="Nakajima Y."/>
            <person name="Mizuno T."/>
            <person name="Morinaga M."/>
            <person name="Sasaki M."/>
            <person name="Togashi T."/>
            <person name="Oyama M."/>
            <person name="Hata H."/>
            <person name="Watanabe M."/>
            <person name="Komatsu T."/>
            <person name="Mizushima-Sugano J."/>
            <person name="Satoh T."/>
            <person name="Shirai Y."/>
            <person name="Takahashi Y."/>
            <person name="Nakagawa K."/>
            <person name="Okumura K."/>
            <person name="Nagase T."/>
            <person name="Nomura N."/>
            <person name="Kikuchi H."/>
            <person name="Masuho Y."/>
            <person name="Yamashita R."/>
            <person name="Nakai K."/>
            <person name="Yada T."/>
            <person name="Nakamura Y."/>
            <person name="Ohara O."/>
            <person name="Isogai T."/>
            <person name="Sugano S."/>
        </authorList>
    </citation>
    <scope>NUCLEOTIDE SEQUENCE [LARGE SCALE MRNA] (ISOFORM 1)</scope>
    <source>
        <tissue>Colon</tissue>
    </source>
</reference>
<reference key="2">
    <citation type="journal article" date="2014" name="Int. J. Cancer">
        <title>Identification of genes expressed by immune cells of the colon that are regulated by colorectal cancer-associated variants.</title>
        <authorList>
            <person name="Peltekova V.D."/>
            <person name="Lemire M."/>
            <person name="Qazi A.M."/>
            <person name="Zaidi S.H."/>
            <person name="Trinh Q.M."/>
            <person name="Bielecki R."/>
            <person name="Rogers M."/>
            <person name="Hodgson L."/>
            <person name="Wang M."/>
            <person name="D'Souza D.J."/>
            <person name="Zandi S."/>
            <person name="Chong T."/>
            <person name="Kwan J.Y."/>
            <person name="Kozak K."/>
            <person name="De Borja R."/>
            <person name="Timms L."/>
            <person name="Rangrej J."/>
            <person name="Volar M."/>
            <person name="Chan-Seng-Yue M."/>
            <person name="Beck T."/>
            <person name="Ash C."/>
            <person name="Lee S."/>
            <person name="Wang J."/>
            <person name="Boutros P.C."/>
            <person name="Stein L.D."/>
            <person name="Dick J.E."/>
            <person name="Gryfe R."/>
            <person name="McPherson J.D."/>
            <person name="Zanke B.W."/>
            <person name="Pollett A."/>
            <person name="Gallinger S."/>
            <person name="Hudson T.J."/>
        </authorList>
    </citation>
    <scope>NUCLEOTIDE SEQUENCE [MRNA] (ISOFORMS 1; 3; 4; 5)</scope>
    <scope>SUBCELLULAR LOCATION</scope>
    <scope>TISSUE SPECIFICITY</scope>
</reference>
<reference key="3">
    <citation type="journal article" date="2006" name="Nature">
        <title>Human chromosome 11 DNA sequence and analysis including novel gene identification.</title>
        <authorList>
            <person name="Taylor T.D."/>
            <person name="Noguchi H."/>
            <person name="Totoki Y."/>
            <person name="Toyoda A."/>
            <person name="Kuroki Y."/>
            <person name="Dewar K."/>
            <person name="Lloyd C."/>
            <person name="Itoh T."/>
            <person name="Takeda T."/>
            <person name="Kim D.-W."/>
            <person name="She X."/>
            <person name="Barlow K.F."/>
            <person name="Bloom T."/>
            <person name="Bruford E."/>
            <person name="Chang J.L."/>
            <person name="Cuomo C.A."/>
            <person name="Eichler E."/>
            <person name="FitzGerald M.G."/>
            <person name="Jaffe D.B."/>
            <person name="LaButti K."/>
            <person name="Nicol R."/>
            <person name="Park H.-S."/>
            <person name="Seaman C."/>
            <person name="Sougnez C."/>
            <person name="Yang X."/>
            <person name="Zimmer A.R."/>
            <person name="Zody M.C."/>
            <person name="Birren B.W."/>
            <person name="Nusbaum C."/>
            <person name="Fujiyama A."/>
            <person name="Hattori M."/>
            <person name="Rogers J."/>
            <person name="Lander E.S."/>
            <person name="Sakaki Y."/>
        </authorList>
    </citation>
    <scope>NUCLEOTIDE SEQUENCE [LARGE SCALE GENOMIC DNA]</scope>
</reference>
<reference key="4">
    <citation type="journal article" date="2004" name="Genome Res.">
        <title>The status, quality, and expansion of the NIH full-length cDNA project: the Mammalian Gene Collection (MGC).</title>
        <authorList>
            <consortium name="The MGC Project Team"/>
        </authorList>
    </citation>
    <scope>NUCLEOTIDE SEQUENCE [LARGE SCALE MRNA] (ISOFORM 1)</scope>
</reference>
<reference key="5">
    <citation type="journal article" date="2022" name="Nature">
        <title>OCA-T1 and OCA-T2 are coactivators of POU2F3 in the tuft cell lineage.</title>
        <authorList>
            <person name="Wu X.S."/>
            <person name="He X.Y."/>
            <person name="Ipsaro J.J."/>
            <person name="Huang Y.H."/>
            <person name="Preall J.B."/>
            <person name="Ng D."/>
            <person name="Shue Y.T."/>
            <person name="Sage J."/>
            <person name="Egeblad M."/>
            <person name="Joshua-Tor L."/>
            <person name="Vakoc C.R."/>
        </authorList>
    </citation>
    <scope>TISSUE SPECIFICITY</scope>
    <scope>SUBUNIT</scope>
    <scope>INTERACTION WITH POU2F3</scope>
    <scope>SUBCELLULAR LOCATION</scope>
    <scope>MUTAGENESIS OF VAL-11 AND VAL-17</scope>
    <scope>OCA DOMAIN</scope>
</reference>
<feature type="chain" id="PRO_0000335687" description="POU class 2 homeobox associating factor 3">
    <location>
        <begin position="1"/>
        <end position="251"/>
    </location>
</feature>
<feature type="domain" description="OCA" evidence="1">
    <location>
        <begin position="5"/>
        <end position="27"/>
    </location>
</feature>
<feature type="region of interest" description="Disordered" evidence="2">
    <location>
        <begin position="24"/>
        <end position="45"/>
    </location>
</feature>
<feature type="compositionally biased region" description="Low complexity" evidence="2">
    <location>
        <begin position="31"/>
        <end position="40"/>
    </location>
</feature>
<feature type="splice variant" id="VSP_061665" description="In isoform 1.">
    <location>
        <begin position="1"/>
        <end position="97"/>
    </location>
</feature>
<feature type="splice variant" id="VSP_061666" description="In isoform 3.">
    <original>MS</original>
    <variation>MSEQRGTKSRHASKGRGSGEDASHAVAAPTQRLSRRAEAQRPSWPLRTSAYPRPPPALPRIHCCVLRHAVRTLRAQKLLRGELEAHSEPGTGAERTDCTEPSCGGPCADPEGRPLPAESGADRGTGWWGC</variation>
    <location>
        <begin position="1"/>
        <end position="2"/>
    </location>
</feature>
<feature type="splice variant" id="VSP_061667" description="In isoform 4.">
    <original>MS</original>
    <variation>MSDGARKRRRKGTRESGQKAKTEGSEGGSSSGLAPLL</variation>
    <location>
        <begin position="1"/>
        <end position="2"/>
    </location>
</feature>
<feature type="mutagenesis site" description="Abolishes interaction with POU2F3." evidence="3">
    <original>V</original>
    <variation>D</variation>
    <location>
        <position position="11"/>
    </location>
</feature>
<feature type="mutagenesis site" description="Abolishes interaction with POU2F3." evidence="3">
    <original>V</original>
    <variation>E</variation>
    <location>
        <position position="17"/>
    </location>
</feature>
<organism>
    <name type="scientific">Homo sapiens</name>
    <name type="common">Human</name>
    <dbReference type="NCBI Taxonomy" id="9606"/>
    <lineage>
        <taxon>Eukaryota</taxon>
        <taxon>Metazoa</taxon>
        <taxon>Chordata</taxon>
        <taxon>Craniata</taxon>
        <taxon>Vertebrata</taxon>
        <taxon>Euteleostomi</taxon>
        <taxon>Mammalia</taxon>
        <taxon>Eutheria</taxon>
        <taxon>Euarchontoglires</taxon>
        <taxon>Primates</taxon>
        <taxon>Haplorrhini</taxon>
        <taxon>Catarrhini</taxon>
        <taxon>Hominidae</taxon>
        <taxon>Homo</taxon>
    </lineage>
</organism>
<protein>
    <recommendedName>
        <fullName evidence="5">POU class 2 homeobox associating factor 3</fullName>
    </recommendedName>
    <alternativeName>
        <fullName>Cancer susceptibility candidate protein 13</fullName>
    </alternativeName>
    <alternativeName>
        <fullName>Colorectal cancer-associated protein 2</fullName>
    </alternativeName>
    <alternativeName>
        <fullName evidence="5">Protein OCA-T2</fullName>
    </alternativeName>
</protein>
<accession>A8K830</accession>
<accession>E9PMJ8</accession>
<accession>Q2TBJ3</accession>
<accession>V5LD62</accession>
<accession>V5LDI3</accession>
<accession>V5LDV1</accession>
<accession>V5LE09</accession>
<accession>V5LEU3</accession>
<evidence type="ECO:0000255" key="1">
    <source>
        <dbReference type="PROSITE-ProRule" id="PRU01347"/>
    </source>
</evidence>
<evidence type="ECO:0000256" key="2">
    <source>
        <dbReference type="SAM" id="MobiDB-lite"/>
    </source>
</evidence>
<evidence type="ECO:0000269" key="3">
    <source>
    </source>
</evidence>
<evidence type="ECO:0000269" key="4">
    <source>
    </source>
</evidence>
<evidence type="ECO:0000303" key="5">
    <source>
    </source>
</evidence>
<evidence type="ECO:0000305" key="6"/>
<evidence type="ECO:0000312" key="7">
    <source>
        <dbReference type="HGNC" id="HGNC:26978"/>
    </source>
</evidence>
<proteinExistence type="evidence at protein level"/>
<sequence>MSEKPKVYQGVRVKITVKELLQQRRAHQAASGGTRSGGSSVHLSDPVAPSSAGLYFEPEPISSTPNYLQRGEFSSCVSCEENSSCLDQIFDSYLQTEMHPEPLLNSTQSAPHHFPDSFQATPFCFNQSLIPGSPSNSSILSGSLDYSYSPVQLPSYAPENYNSPASLDTRTCGYPPEDHSYQHLSSHAQYSCFSSATTSICYCASCEAEDLDALQAAEYFYPSTDCVDFAPSAAATSDFYKRETNCDICYS</sequence>
<keyword id="KW-0010">Activator</keyword>
<keyword id="KW-0025">Alternative splicing</keyword>
<keyword id="KW-0963">Cytoplasm</keyword>
<keyword id="KW-0539">Nucleus</keyword>
<keyword id="KW-1185">Reference proteome</keyword>
<keyword id="KW-0804">Transcription</keyword>
<keyword id="KW-0805">Transcription regulation</keyword>
<dbReference type="EMBL" id="AK292195">
    <property type="protein sequence ID" value="BAF84884.1"/>
    <property type="molecule type" value="mRNA"/>
</dbReference>
<dbReference type="EMBL" id="KF740510">
    <property type="protein sequence ID" value="AHA49743.1"/>
    <property type="molecule type" value="mRNA"/>
</dbReference>
<dbReference type="EMBL" id="KF740511">
    <property type="protein sequence ID" value="AHA49744.1"/>
    <property type="molecule type" value="mRNA"/>
</dbReference>
<dbReference type="EMBL" id="KF740512">
    <property type="protein sequence ID" value="AHA49745.1"/>
    <property type="molecule type" value="mRNA"/>
</dbReference>
<dbReference type="EMBL" id="KF740513">
    <property type="protein sequence ID" value="AHA49746.1"/>
    <property type="status" value="ALT_FRAME"/>
    <property type="molecule type" value="mRNA"/>
</dbReference>
<dbReference type="EMBL" id="KF740514">
    <property type="protein sequence ID" value="AHA49747.1"/>
    <property type="molecule type" value="mRNA"/>
</dbReference>
<dbReference type="EMBL" id="AP002448">
    <property type="status" value="NOT_ANNOTATED_CDS"/>
    <property type="molecule type" value="Genomic_DNA"/>
</dbReference>
<dbReference type="EMBL" id="BC110079">
    <property type="protein sequence ID" value="AAI10080.1"/>
    <property type="status" value="ALT_INIT"/>
    <property type="molecule type" value="mRNA"/>
</dbReference>
<dbReference type="CCDS" id="CCDS44728.1">
    <molecule id="A8K830-1"/>
</dbReference>
<dbReference type="CCDS" id="CCDS73378.1">
    <molecule id="A8K830-5"/>
</dbReference>
<dbReference type="RefSeq" id="NP_001129577.1">
    <molecule id="A8K830-1"/>
    <property type="nucleotide sequence ID" value="NM_001136105.3"/>
</dbReference>
<dbReference type="RefSeq" id="NP_001258386.1">
    <molecule id="A8K830-1"/>
    <property type="nucleotide sequence ID" value="NM_001271457.2"/>
</dbReference>
<dbReference type="RefSeq" id="NP_001258387.1">
    <molecule id="A8K830-5"/>
    <property type="nucleotide sequence ID" value="NM_001271458.2"/>
</dbReference>
<dbReference type="RefSeq" id="NP_001357413.1">
    <molecule id="A8K830-1"/>
    <property type="nucleotide sequence ID" value="NM_001370484.1"/>
</dbReference>
<dbReference type="RefSeq" id="XP_016872687.1">
    <property type="nucleotide sequence ID" value="XM_017017198.1"/>
</dbReference>
<dbReference type="RefSeq" id="XP_016872688.1">
    <molecule id="A8K830-1"/>
    <property type="nucleotide sequence ID" value="XM_017017199.2"/>
</dbReference>
<dbReference type="RefSeq" id="XP_016872689.1">
    <molecule id="A8K830-1"/>
    <property type="nucleotide sequence ID" value="XM_017017200.2"/>
</dbReference>
<dbReference type="RefSeq" id="XP_047282320.1">
    <molecule id="A8K830-1"/>
    <property type="nucleotide sequence ID" value="XM_047426364.1"/>
</dbReference>
<dbReference type="RefSeq" id="XP_047282321.1">
    <molecule id="A8K830-1"/>
    <property type="nucleotide sequence ID" value="XM_047426365.1"/>
</dbReference>
<dbReference type="RefSeq" id="XP_054223634.1">
    <molecule id="A8K830-1"/>
    <property type="nucleotide sequence ID" value="XM_054367659.1"/>
</dbReference>
<dbReference type="RefSeq" id="XP_054223635.1">
    <molecule id="A8K830-1"/>
    <property type="nucleotide sequence ID" value="XM_054367660.1"/>
</dbReference>
<dbReference type="RefSeq" id="XP_054223636.1">
    <molecule id="A8K830-1"/>
    <property type="nucleotide sequence ID" value="XM_054367661.1"/>
</dbReference>
<dbReference type="RefSeq" id="XP_054223637.1">
    <molecule id="A8K830-1"/>
    <property type="nucleotide sequence ID" value="XM_054367662.1"/>
</dbReference>
<dbReference type="SMR" id="A8K830"/>
<dbReference type="BioGRID" id="125682">
    <property type="interactions" value="1"/>
</dbReference>
<dbReference type="FunCoup" id="A8K830">
    <property type="interactions" value="325"/>
</dbReference>
<dbReference type="STRING" id="9606.ENSP00000484135"/>
<dbReference type="BioMuta" id="COLCA2"/>
<dbReference type="MassIVE" id="A8K830"/>
<dbReference type="PaxDb" id="9606-ENSP00000484135"/>
<dbReference type="DNASU" id="120376"/>
<dbReference type="Ensembl" id="ENST00000398035.6">
    <molecule id="A8K830-1"/>
    <property type="protein sequence ID" value="ENSP00000381115.2"/>
    <property type="gene ID" value="ENSG00000214290.9"/>
</dbReference>
<dbReference type="Ensembl" id="ENST00000526216.1">
    <molecule id="A8K830-1"/>
    <property type="protein sequence ID" value="ENSP00000434519.1"/>
    <property type="gene ID" value="ENSG00000214290.9"/>
</dbReference>
<dbReference type="Ensembl" id="ENST00000610738.6">
    <molecule id="A8K830-5"/>
    <property type="protein sequence ID" value="ENSP00000484135.1"/>
    <property type="gene ID" value="ENSG00000214290.9"/>
</dbReference>
<dbReference type="Ensembl" id="ENST00000614153.4">
    <molecule id="A8K830-1"/>
    <property type="protein sequence ID" value="ENSP00000481028.2"/>
    <property type="gene ID" value="ENSG00000214290.9"/>
</dbReference>
<dbReference type="Ensembl" id="ENST00000638573.1">
    <molecule id="A8K830-4"/>
    <property type="protein sequence ID" value="ENSP00000492570.1"/>
    <property type="gene ID" value="ENSG00000214290.9"/>
</dbReference>
<dbReference type="GeneID" id="120376"/>
<dbReference type="KEGG" id="hsa:120376"/>
<dbReference type="MANE-Select" id="ENST00000610738.6">
    <property type="protein sequence ID" value="ENSP00000484135.1"/>
    <property type="RefSeq nucleotide sequence ID" value="NM_001271458.2"/>
    <property type="RefSeq protein sequence ID" value="NP_001258387.1"/>
</dbReference>
<dbReference type="UCSC" id="uc010rwf.3">
    <molecule id="A8K830-5"/>
    <property type="organism name" value="human"/>
</dbReference>
<dbReference type="AGR" id="HGNC:26978"/>
<dbReference type="CTD" id="120376"/>
<dbReference type="DisGeNET" id="120376"/>
<dbReference type="GeneCards" id="POU2AF3"/>
<dbReference type="HGNC" id="HGNC:26978">
    <property type="gene designation" value="POU2AF3"/>
</dbReference>
<dbReference type="HPA" id="ENSG00000214290">
    <property type="expression patterns" value="Low tissue specificity"/>
</dbReference>
<dbReference type="MIM" id="615694">
    <property type="type" value="gene"/>
</dbReference>
<dbReference type="neXtProt" id="NX_A8K830"/>
<dbReference type="OpenTargets" id="ENSG00000214290"/>
<dbReference type="PharmGKB" id="PA165543240"/>
<dbReference type="VEuPathDB" id="HostDB:ENSG00000214290"/>
<dbReference type="eggNOG" id="ENOG502S1YS">
    <property type="taxonomic scope" value="Eukaryota"/>
</dbReference>
<dbReference type="GeneTree" id="ENSGT00420000030454"/>
<dbReference type="HOGENOM" id="CLU_102979_0_0_1"/>
<dbReference type="InParanoid" id="A8K830"/>
<dbReference type="OMA" id="HGYPQED"/>
<dbReference type="PAN-GO" id="A8K830">
    <property type="GO annotations" value="1 GO annotation based on evolutionary models"/>
</dbReference>
<dbReference type="PhylomeDB" id="A8K830"/>
<dbReference type="PathwayCommons" id="A8K830"/>
<dbReference type="BioGRID-ORCS" id="120376">
    <property type="hits" value="15 hits in 1126 CRISPR screens"/>
</dbReference>
<dbReference type="ChiTaRS" id="COLCA2">
    <property type="organism name" value="human"/>
</dbReference>
<dbReference type="GenomeRNAi" id="120376"/>
<dbReference type="Pharos" id="A8K830">
    <property type="development level" value="Tdark"/>
</dbReference>
<dbReference type="PRO" id="PR:A8K830"/>
<dbReference type="Proteomes" id="UP000005640">
    <property type="component" value="Chromosome 11"/>
</dbReference>
<dbReference type="RNAct" id="A8K830">
    <property type="molecule type" value="protein"/>
</dbReference>
<dbReference type="Bgee" id="ENSG00000214290">
    <property type="expression patterns" value="Expressed in pancreatic ductal cell and 140 other cell types or tissues"/>
</dbReference>
<dbReference type="ExpressionAtlas" id="A8K830">
    <property type="expression patterns" value="baseline and differential"/>
</dbReference>
<dbReference type="GO" id="GO:0005737">
    <property type="term" value="C:cytoplasm"/>
    <property type="evidence" value="ECO:0000314"/>
    <property type="project" value="UniProtKB"/>
</dbReference>
<dbReference type="GO" id="GO:0005829">
    <property type="term" value="C:cytosol"/>
    <property type="evidence" value="ECO:0000314"/>
    <property type="project" value="HPA"/>
</dbReference>
<dbReference type="GO" id="GO:0005654">
    <property type="term" value="C:nucleoplasm"/>
    <property type="evidence" value="ECO:0000314"/>
    <property type="project" value="HPA"/>
</dbReference>
<dbReference type="GO" id="GO:0005634">
    <property type="term" value="C:nucleus"/>
    <property type="evidence" value="ECO:0000314"/>
    <property type="project" value="UniProtKB"/>
</dbReference>
<dbReference type="GO" id="GO:0003677">
    <property type="term" value="F:DNA binding"/>
    <property type="evidence" value="ECO:0000314"/>
    <property type="project" value="UniProtKB"/>
</dbReference>
<dbReference type="GO" id="GO:0070974">
    <property type="term" value="F:POU domain binding"/>
    <property type="evidence" value="ECO:0007669"/>
    <property type="project" value="InterPro"/>
</dbReference>
<dbReference type="GO" id="GO:0003713">
    <property type="term" value="F:transcription coactivator activity"/>
    <property type="evidence" value="ECO:0000314"/>
    <property type="project" value="UniProtKB"/>
</dbReference>
<dbReference type="InterPro" id="IPR047571">
    <property type="entry name" value="OCA"/>
</dbReference>
<dbReference type="InterPro" id="IPR043265">
    <property type="entry name" value="OCAT2"/>
</dbReference>
<dbReference type="PANTHER" id="PTHR36689">
    <property type="entry name" value="COLORECTAL CANCER-ASSOCIATED PROTEIN 2"/>
    <property type="match status" value="1"/>
</dbReference>
<dbReference type="PANTHER" id="PTHR36689:SF1">
    <property type="entry name" value="POU CLASS 2 HOMEOBOX ASSOCIATING FACTOR 3"/>
    <property type="match status" value="1"/>
</dbReference>
<dbReference type="PROSITE" id="PS52003">
    <property type="entry name" value="OCA"/>
    <property type="match status" value="1"/>
</dbReference>
<comment type="function">
    <text evidence="4">Transcriptional coactivator that specifically associates with POU2F3 (PubMed:35576971). This complex drives the development of tuft cells, a rare a rare chemosensory cells that coordinate immune and neural functions within mucosal epithelial tissues (PubMed:35576971).</text>
</comment>
<comment type="subunit">
    <text evidence="4">Interacts with POU2F3 in a DNA-dependent manner; this interaction increases POU2F3 transactivation activity.</text>
</comment>
<comment type="subcellular location">
    <subcellularLocation>
        <location evidence="3">Cytoplasm</location>
    </subcellularLocation>
    <subcellularLocation>
        <location evidence="4">Nucleus</location>
    </subcellularLocation>
</comment>
<comment type="alternative products">
    <event type="alternative splicing"/>
    <isoform>
        <id>A8K830-5</id>
        <name>5</name>
        <sequence type="displayed"/>
    </isoform>
    <isoform>
        <id>A8K830-1</id>
        <name>1</name>
        <sequence type="described" ref="VSP_061665"/>
    </isoform>
    <isoform>
        <id>A8K830-3</id>
        <name>3</name>
        <sequence type="described" ref="VSP_061666"/>
    </isoform>
    <isoform>
        <id>A8K830-4</id>
        <name>4</name>
        <sequence type="described" ref="VSP_061667"/>
    </isoform>
</comment>
<comment type="tissue specificity">
    <text evidence="3 4">Expressed in many cell types of epithelial, mesenchymal and hematopoietic origins (PubMed:24154973). Expressed in tufs cells (PubMed:35576971).</text>
</comment>
<comment type="domain">
    <text evidence="4">In the N-terminus possesses a conserved OCA domain for bivalent binding to class II POU domain-containing transcription factors and to an octamer DNA motif (5'-ATGAAAT-3').</text>
</comment>
<comment type="similarity">
    <text evidence="6">Belongs to the POU2AF family.</text>
</comment>
<comment type="sequence caution" evidence="6">
    <conflict type="erroneous initiation">
        <sequence resource="EMBL-CDS" id="AAI10080"/>
    </conflict>
    <text>Extended N-terminus.</text>
</comment>
<comment type="sequence caution" evidence="6">
    <conflict type="frameshift">
        <sequence resource="EMBL-CDS" id="AHA49746"/>
    </conflict>
</comment>
<comment type="sequence caution" evidence="6">
    <conflict type="erroneous gene model prediction">
        <sequence resource="EMBL" id="AP002448"/>
    </conflict>
</comment>
<gene>
    <name evidence="7" type="primary">POU2AF3</name>
    <name type="synonym">C11orf93</name>
    <name type="synonym">CASC13</name>
    <name type="synonym">COLCA2</name>
</gene>